<feature type="chain" id="PRO_1000213284" description="Phosphoribosyl-ATP pyrophosphatase">
    <location>
        <begin position="1"/>
        <end position="106"/>
    </location>
</feature>
<accession>B9M0M1</accession>
<organism>
    <name type="scientific">Geotalea daltonii (strain DSM 22248 / JCM 15807 / FRC-32)</name>
    <name type="common">Geobacter daltonii</name>
    <dbReference type="NCBI Taxonomy" id="316067"/>
    <lineage>
        <taxon>Bacteria</taxon>
        <taxon>Pseudomonadati</taxon>
        <taxon>Thermodesulfobacteriota</taxon>
        <taxon>Desulfuromonadia</taxon>
        <taxon>Geobacterales</taxon>
        <taxon>Geobacteraceae</taxon>
        <taxon>Geotalea</taxon>
    </lineage>
</organism>
<keyword id="KW-0028">Amino-acid biosynthesis</keyword>
<keyword id="KW-0067">ATP-binding</keyword>
<keyword id="KW-0963">Cytoplasm</keyword>
<keyword id="KW-0368">Histidine biosynthesis</keyword>
<keyword id="KW-0378">Hydrolase</keyword>
<keyword id="KW-0547">Nucleotide-binding</keyword>
<keyword id="KW-1185">Reference proteome</keyword>
<sequence length="106" mass="12014">MNDDILQAVYRVILERKANPSEQSYTASLMAKGIDKILKKLGEEATEVVIAGKGGAREEIIYETADLFFHTLVLLGYCDINPDEIYDELRRRFGMSGIAEKESRDR</sequence>
<dbReference type="EC" id="3.6.1.31" evidence="1"/>
<dbReference type="EMBL" id="CP001390">
    <property type="protein sequence ID" value="ACM19058.1"/>
    <property type="molecule type" value="Genomic_DNA"/>
</dbReference>
<dbReference type="RefSeq" id="WP_012645787.1">
    <property type="nucleotide sequence ID" value="NC_011979.1"/>
</dbReference>
<dbReference type="SMR" id="B9M0M1"/>
<dbReference type="STRING" id="316067.Geob_0694"/>
<dbReference type="KEGG" id="geo:Geob_0694"/>
<dbReference type="eggNOG" id="COG0140">
    <property type="taxonomic scope" value="Bacteria"/>
</dbReference>
<dbReference type="HOGENOM" id="CLU_123337_1_2_7"/>
<dbReference type="OrthoDB" id="9795769at2"/>
<dbReference type="UniPathway" id="UPA00031">
    <property type="reaction ID" value="UER00007"/>
</dbReference>
<dbReference type="Proteomes" id="UP000007721">
    <property type="component" value="Chromosome"/>
</dbReference>
<dbReference type="GO" id="GO:0005737">
    <property type="term" value="C:cytoplasm"/>
    <property type="evidence" value="ECO:0007669"/>
    <property type="project" value="UniProtKB-SubCell"/>
</dbReference>
<dbReference type="GO" id="GO:0005524">
    <property type="term" value="F:ATP binding"/>
    <property type="evidence" value="ECO:0007669"/>
    <property type="project" value="UniProtKB-KW"/>
</dbReference>
<dbReference type="GO" id="GO:0004636">
    <property type="term" value="F:phosphoribosyl-ATP diphosphatase activity"/>
    <property type="evidence" value="ECO:0007669"/>
    <property type="project" value="UniProtKB-UniRule"/>
</dbReference>
<dbReference type="GO" id="GO:0000105">
    <property type="term" value="P:L-histidine biosynthetic process"/>
    <property type="evidence" value="ECO:0007669"/>
    <property type="project" value="UniProtKB-UniRule"/>
</dbReference>
<dbReference type="CDD" id="cd11534">
    <property type="entry name" value="NTP-PPase_HisIE_like"/>
    <property type="match status" value="1"/>
</dbReference>
<dbReference type="Gene3D" id="1.10.287.1080">
    <property type="entry name" value="MazG-like"/>
    <property type="match status" value="1"/>
</dbReference>
<dbReference type="HAMAP" id="MF_01020">
    <property type="entry name" value="HisE"/>
    <property type="match status" value="1"/>
</dbReference>
<dbReference type="InterPro" id="IPR008179">
    <property type="entry name" value="HisE"/>
</dbReference>
<dbReference type="InterPro" id="IPR021130">
    <property type="entry name" value="PRib-ATP_PPHydrolase-like"/>
</dbReference>
<dbReference type="NCBIfam" id="TIGR03188">
    <property type="entry name" value="histidine_hisI"/>
    <property type="match status" value="1"/>
</dbReference>
<dbReference type="NCBIfam" id="NF001611">
    <property type="entry name" value="PRK00400.1-3"/>
    <property type="match status" value="1"/>
</dbReference>
<dbReference type="PANTHER" id="PTHR42945">
    <property type="entry name" value="HISTIDINE BIOSYNTHESIS BIFUNCTIONAL PROTEIN"/>
    <property type="match status" value="1"/>
</dbReference>
<dbReference type="PANTHER" id="PTHR42945:SF9">
    <property type="entry name" value="HISTIDINE BIOSYNTHESIS BIFUNCTIONAL PROTEIN HISIE"/>
    <property type="match status" value="1"/>
</dbReference>
<dbReference type="Pfam" id="PF01503">
    <property type="entry name" value="PRA-PH"/>
    <property type="match status" value="1"/>
</dbReference>
<dbReference type="SUPFAM" id="SSF101386">
    <property type="entry name" value="all-alpha NTP pyrophosphatases"/>
    <property type="match status" value="1"/>
</dbReference>
<protein>
    <recommendedName>
        <fullName evidence="1">Phosphoribosyl-ATP pyrophosphatase</fullName>
        <shortName evidence="1">PRA-PH</shortName>
        <ecNumber evidence="1">3.6.1.31</ecNumber>
    </recommendedName>
</protein>
<reference key="1">
    <citation type="submission" date="2009-01" db="EMBL/GenBank/DDBJ databases">
        <title>Complete sequence of Geobacter sp. FRC-32.</title>
        <authorList>
            <consortium name="US DOE Joint Genome Institute"/>
            <person name="Lucas S."/>
            <person name="Copeland A."/>
            <person name="Lapidus A."/>
            <person name="Glavina del Rio T."/>
            <person name="Dalin E."/>
            <person name="Tice H."/>
            <person name="Bruce D."/>
            <person name="Goodwin L."/>
            <person name="Pitluck S."/>
            <person name="Saunders E."/>
            <person name="Brettin T."/>
            <person name="Detter J.C."/>
            <person name="Han C."/>
            <person name="Larimer F."/>
            <person name="Land M."/>
            <person name="Hauser L."/>
            <person name="Kyrpides N."/>
            <person name="Ovchinnikova G."/>
            <person name="Kostka J."/>
            <person name="Richardson P."/>
        </authorList>
    </citation>
    <scope>NUCLEOTIDE SEQUENCE [LARGE SCALE GENOMIC DNA]</scope>
    <source>
        <strain>DSM 22248 / JCM 15807 / FRC-32</strain>
    </source>
</reference>
<name>HIS2_GEODF</name>
<comment type="catalytic activity">
    <reaction evidence="1">
        <text>1-(5-phospho-beta-D-ribosyl)-ATP + H2O = 1-(5-phospho-beta-D-ribosyl)-5'-AMP + diphosphate + H(+)</text>
        <dbReference type="Rhea" id="RHEA:22828"/>
        <dbReference type="ChEBI" id="CHEBI:15377"/>
        <dbReference type="ChEBI" id="CHEBI:15378"/>
        <dbReference type="ChEBI" id="CHEBI:33019"/>
        <dbReference type="ChEBI" id="CHEBI:59457"/>
        <dbReference type="ChEBI" id="CHEBI:73183"/>
        <dbReference type="EC" id="3.6.1.31"/>
    </reaction>
</comment>
<comment type="pathway">
    <text evidence="1">Amino-acid biosynthesis; L-histidine biosynthesis; L-histidine from 5-phospho-alpha-D-ribose 1-diphosphate: step 2/9.</text>
</comment>
<comment type="subcellular location">
    <subcellularLocation>
        <location evidence="1">Cytoplasm</location>
    </subcellularLocation>
</comment>
<comment type="similarity">
    <text evidence="1">Belongs to the PRA-PH family.</text>
</comment>
<proteinExistence type="inferred from homology"/>
<evidence type="ECO:0000255" key="1">
    <source>
        <dbReference type="HAMAP-Rule" id="MF_01020"/>
    </source>
</evidence>
<gene>
    <name evidence="1" type="primary">hisE</name>
    <name type="ordered locus">Geob_0694</name>
</gene>